<evidence type="ECO:0000255" key="1">
    <source>
        <dbReference type="HAMAP-Rule" id="MF_01810"/>
    </source>
</evidence>
<evidence type="ECO:0000256" key="2">
    <source>
        <dbReference type="SAM" id="MobiDB-lite"/>
    </source>
</evidence>
<sequence>MDSQRNLLVIALLFVSFMIWQAWEQDKNPQPQAQQTTQTTTTAAGSAADQGVPASGQGKLISVKTDVLDLTINTRGGDVEQALLPAYPKELNSTQPFQLLETSPQFIYQAQSGLTGRDGPDNPANGPRPLYNVEKDAYVLAEGQNELQVPMTYTDAAGNTFTKTFVLKRGDYAVNVNYNVQNAGEKPLEISTFGQLKQSITLPPHLDTGSSNFALHTFRGAAYSTPDEKYEKYKFDTIADNENLNISSKGGWVAMLQQYFATAWIPHNDGTNNFYTANLGNGIAAIGYKSQPVLVQPGQTGAMNSTLWVGPEIQDKMAAVAPHLDLTVDYGWLWFISQPLFKLLKWIHSFVGNWGFSIIIITFIVRGIMYPLTKTQYTSMAKMRMLQPKIQAMRERLGDDKQRISQEMMALYKAEKVNPLGGCFPLLIQMPIFLALYYMLMGSVELRQAPFALWIHDLSAQDPYYILPILMGVTMFFIQKMSPTTVTDPMQQKIMTFMPVIFTVFFLWFPSGLVLYYIVSNLVTIIQQQLIYRGLEKRGLHSREKKKS</sequence>
<dbReference type="EMBL" id="CP000036">
    <property type="protein sequence ID" value="ABB68149.1"/>
    <property type="molecule type" value="Genomic_DNA"/>
</dbReference>
<dbReference type="RefSeq" id="WP_000378260.1">
    <property type="nucleotide sequence ID" value="NC_007613.1"/>
</dbReference>
<dbReference type="SMR" id="Q31UV9"/>
<dbReference type="KEGG" id="sbo:SBO_3671"/>
<dbReference type="HOGENOM" id="CLU_016535_3_0_6"/>
<dbReference type="Proteomes" id="UP000007067">
    <property type="component" value="Chromosome"/>
</dbReference>
<dbReference type="GO" id="GO:0005886">
    <property type="term" value="C:plasma membrane"/>
    <property type="evidence" value="ECO:0007669"/>
    <property type="project" value="UniProtKB-SubCell"/>
</dbReference>
<dbReference type="GO" id="GO:0032977">
    <property type="term" value="F:membrane insertase activity"/>
    <property type="evidence" value="ECO:0007669"/>
    <property type="project" value="InterPro"/>
</dbReference>
<dbReference type="GO" id="GO:0051205">
    <property type="term" value="P:protein insertion into membrane"/>
    <property type="evidence" value="ECO:0007669"/>
    <property type="project" value="TreeGrafter"/>
</dbReference>
<dbReference type="GO" id="GO:0015031">
    <property type="term" value="P:protein transport"/>
    <property type="evidence" value="ECO:0007669"/>
    <property type="project" value="UniProtKB-KW"/>
</dbReference>
<dbReference type="CDD" id="cd20070">
    <property type="entry name" value="5TM_YidC_Alb3"/>
    <property type="match status" value="1"/>
</dbReference>
<dbReference type="CDD" id="cd19961">
    <property type="entry name" value="EcYidC-like_peri"/>
    <property type="match status" value="1"/>
</dbReference>
<dbReference type="FunFam" id="2.70.98.90:FF:000001">
    <property type="entry name" value="Membrane protein insertase YidC"/>
    <property type="match status" value="1"/>
</dbReference>
<dbReference type="Gene3D" id="2.70.98.90">
    <property type="match status" value="1"/>
</dbReference>
<dbReference type="HAMAP" id="MF_01810">
    <property type="entry name" value="YidC_type1"/>
    <property type="match status" value="1"/>
</dbReference>
<dbReference type="InterPro" id="IPR019998">
    <property type="entry name" value="Membr_insert_YidC"/>
</dbReference>
<dbReference type="InterPro" id="IPR028053">
    <property type="entry name" value="Membr_insert_YidC_N"/>
</dbReference>
<dbReference type="InterPro" id="IPR001708">
    <property type="entry name" value="YidC/ALB3/OXA1/COX18"/>
</dbReference>
<dbReference type="InterPro" id="IPR028055">
    <property type="entry name" value="YidC/Oxa/ALB_C"/>
</dbReference>
<dbReference type="InterPro" id="IPR047196">
    <property type="entry name" value="YidC_ALB_C"/>
</dbReference>
<dbReference type="InterPro" id="IPR038221">
    <property type="entry name" value="YidC_periplasmic_sf"/>
</dbReference>
<dbReference type="NCBIfam" id="NF002351">
    <property type="entry name" value="PRK01318.1-1"/>
    <property type="match status" value="1"/>
</dbReference>
<dbReference type="NCBIfam" id="NF002352">
    <property type="entry name" value="PRK01318.1-3"/>
    <property type="match status" value="1"/>
</dbReference>
<dbReference type="NCBIfam" id="NF002353">
    <property type="entry name" value="PRK01318.1-4"/>
    <property type="match status" value="1"/>
</dbReference>
<dbReference type="NCBIfam" id="TIGR03593">
    <property type="entry name" value="yidC_nterm"/>
    <property type="match status" value="1"/>
</dbReference>
<dbReference type="NCBIfam" id="TIGR03592">
    <property type="entry name" value="yidC_oxa1_cterm"/>
    <property type="match status" value="1"/>
</dbReference>
<dbReference type="PANTHER" id="PTHR12428:SF65">
    <property type="entry name" value="CYTOCHROME C OXIDASE ASSEMBLY PROTEIN COX18, MITOCHONDRIAL"/>
    <property type="match status" value="1"/>
</dbReference>
<dbReference type="PANTHER" id="PTHR12428">
    <property type="entry name" value="OXA1"/>
    <property type="match status" value="1"/>
</dbReference>
<dbReference type="Pfam" id="PF02096">
    <property type="entry name" value="60KD_IMP"/>
    <property type="match status" value="1"/>
</dbReference>
<dbReference type="Pfam" id="PF14849">
    <property type="entry name" value="YidC_periplas"/>
    <property type="match status" value="1"/>
</dbReference>
<dbReference type="PRINTS" id="PR00701">
    <property type="entry name" value="60KDINNERMP"/>
</dbReference>
<dbReference type="PRINTS" id="PR01900">
    <property type="entry name" value="YIDCPROTEIN"/>
</dbReference>
<accession>Q31UV9</accession>
<organism>
    <name type="scientific">Shigella boydii serotype 4 (strain Sb227)</name>
    <dbReference type="NCBI Taxonomy" id="300268"/>
    <lineage>
        <taxon>Bacteria</taxon>
        <taxon>Pseudomonadati</taxon>
        <taxon>Pseudomonadota</taxon>
        <taxon>Gammaproteobacteria</taxon>
        <taxon>Enterobacterales</taxon>
        <taxon>Enterobacteriaceae</taxon>
        <taxon>Shigella</taxon>
    </lineage>
</organism>
<gene>
    <name evidence="1" type="primary">yidC</name>
    <name type="ordered locus">SBO_3671</name>
</gene>
<proteinExistence type="inferred from homology"/>
<reference key="1">
    <citation type="journal article" date="2005" name="Nucleic Acids Res.">
        <title>Genome dynamics and diversity of Shigella species, the etiologic agents of bacillary dysentery.</title>
        <authorList>
            <person name="Yang F."/>
            <person name="Yang J."/>
            <person name="Zhang X."/>
            <person name="Chen L."/>
            <person name="Jiang Y."/>
            <person name="Yan Y."/>
            <person name="Tang X."/>
            <person name="Wang J."/>
            <person name="Xiong Z."/>
            <person name="Dong J."/>
            <person name="Xue Y."/>
            <person name="Zhu Y."/>
            <person name="Xu X."/>
            <person name="Sun L."/>
            <person name="Chen S."/>
            <person name="Nie H."/>
            <person name="Peng J."/>
            <person name="Xu J."/>
            <person name="Wang Y."/>
            <person name="Yuan Z."/>
            <person name="Wen Y."/>
            <person name="Yao Z."/>
            <person name="Shen Y."/>
            <person name="Qiang B."/>
            <person name="Hou Y."/>
            <person name="Yu J."/>
            <person name="Jin Q."/>
        </authorList>
    </citation>
    <scope>NUCLEOTIDE SEQUENCE [LARGE SCALE GENOMIC DNA]</scope>
    <source>
        <strain>Sb227</strain>
    </source>
</reference>
<comment type="function">
    <text evidence="1">Required for the insertion and/or proper folding and/or complex formation of integral membrane proteins into the membrane. Involved in integration of membrane proteins that insert both dependently and independently of the Sec translocase complex, as well as at least some lipoproteins. Aids folding of multispanning membrane proteins.</text>
</comment>
<comment type="subunit">
    <text evidence="1">Interacts with the Sec translocase complex via SecD. Specifically interacts with transmembrane segments of nascent integral membrane proteins during membrane integration.</text>
</comment>
<comment type="subcellular location">
    <subcellularLocation>
        <location evidence="1">Cell inner membrane</location>
        <topology evidence="1">Multi-pass membrane protein</topology>
    </subcellularLocation>
</comment>
<comment type="similarity">
    <text evidence="1">Belongs to the OXA1/ALB3/YidC family. Type 1 subfamily.</text>
</comment>
<feature type="chain" id="PRO_1000070176" description="Membrane protein insertase YidC">
    <location>
        <begin position="1"/>
        <end position="548"/>
    </location>
</feature>
<feature type="transmembrane region" description="Helical" evidence="1">
    <location>
        <begin position="6"/>
        <end position="26"/>
    </location>
</feature>
<feature type="transmembrane region" description="Helical" evidence="1">
    <location>
        <begin position="350"/>
        <end position="370"/>
    </location>
</feature>
<feature type="transmembrane region" description="Helical" evidence="1">
    <location>
        <begin position="420"/>
        <end position="440"/>
    </location>
</feature>
<feature type="transmembrane region" description="Helical" evidence="1">
    <location>
        <begin position="458"/>
        <end position="478"/>
    </location>
</feature>
<feature type="transmembrane region" description="Helical" evidence="1">
    <location>
        <begin position="499"/>
        <end position="519"/>
    </location>
</feature>
<feature type="region of interest" description="Disordered" evidence="2">
    <location>
        <begin position="28"/>
        <end position="55"/>
    </location>
</feature>
<feature type="compositionally biased region" description="Low complexity" evidence="2">
    <location>
        <begin position="30"/>
        <end position="50"/>
    </location>
</feature>
<name>YIDC_SHIBS</name>
<protein>
    <recommendedName>
        <fullName evidence="1">Membrane protein insertase YidC</fullName>
    </recommendedName>
    <alternativeName>
        <fullName evidence="1">Foldase YidC</fullName>
    </alternativeName>
    <alternativeName>
        <fullName evidence="1">Membrane integrase YidC</fullName>
    </alternativeName>
    <alternativeName>
        <fullName evidence="1">Membrane protein YidC</fullName>
    </alternativeName>
</protein>
<keyword id="KW-0997">Cell inner membrane</keyword>
<keyword id="KW-1003">Cell membrane</keyword>
<keyword id="KW-0143">Chaperone</keyword>
<keyword id="KW-0472">Membrane</keyword>
<keyword id="KW-0653">Protein transport</keyword>
<keyword id="KW-0812">Transmembrane</keyword>
<keyword id="KW-1133">Transmembrane helix</keyword>
<keyword id="KW-0813">Transport</keyword>